<proteinExistence type="uncertain"/>
<organism>
    <name type="scientific">Caulobacter vibrioides (strain ATCC 19089 / CIP 103742 / CB 15)</name>
    <name type="common">Caulobacter crescentus</name>
    <dbReference type="NCBI Taxonomy" id="190650"/>
    <lineage>
        <taxon>Bacteria</taxon>
        <taxon>Pseudomonadati</taxon>
        <taxon>Pseudomonadota</taxon>
        <taxon>Alphaproteobacteria</taxon>
        <taxon>Caulobacterales</taxon>
        <taxon>Caulobacteraceae</taxon>
        <taxon>Caulobacter</taxon>
    </lineage>
</organism>
<sequence length="205" mass="22108">MAKKPEKEAPAPEGEEGAEGEAPAKKKPPILIIAIAAGVLVLGGGGAAAFFLLKPKPAAEAGEHGEKKEEKKKEKKKEEKGDKKDAEKGAEGAAGTPVIKEGPDGVVFYTLPDIVVNMQTADGKSTFLKLKLTFELPDEETADELTPNLPRLQDMFQTFLRELRPEDLNGSQGTYQLRVELLRRVNLVAAPAKVNAVLIEEMLIN</sequence>
<feature type="chain" id="PRO_0000180913" description="Flagellar FliL protein">
    <location>
        <begin position="1"/>
        <end position="205"/>
    </location>
</feature>
<feature type="transmembrane region" description="Helical" evidence="2">
    <location>
        <begin position="13"/>
        <end position="35"/>
    </location>
</feature>
<feature type="region of interest" description="Disordered" evidence="3">
    <location>
        <begin position="1"/>
        <end position="25"/>
    </location>
</feature>
<feature type="region of interest" description="Disordered" evidence="3">
    <location>
        <begin position="58"/>
        <end position="98"/>
    </location>
</feature>
<feature type="compositionally biased region" description="Basic and acidic residues" evidence="3">
    <location>
        <begin position="1"/>
        <end position="10"/>
    </location>
</feature>
<feature type="compositionally biased region" description="Basic and acidic residues" evidence="3">
    <location>
        <begin position="61"/>
        <end position="90"/>
    </location>
</feature>
<accession>P0CG27</accession>
<accession>P34008</accession>
<reference key="1">
    <citation type="journal article" date="2001" name="Proc. Natl. Acad. Sci. U.S.A.">
        <title>Complete genome sequence of Caulobacter crescentus.</title>
        <authorList>
            <person name="Nierman W.C."/>
            <person name="Feldblyum T.V."/>
            <person name="Laub M.T."/>
            <person name="Paulsen I.T."/>
            <person name="Nelson K.E."/>
            <person name="Eisen J.A."/>
            <person name="Heidelberg J.F."/>
            <person name="Alley M.R.K."/>
            <person name="Ohta N."/>
            <person name="Maddock J.R."/>
            <person name="Potocka I."/>
            <person name="Nelson W.C."/>
            <person name="Newton A."/>
            <person name="Stephens C."/>
            <person name="Phadke N.D."/>
            <person name="Ely B."/>
            <person name="DeBoy R.T."/>
            <person name="Dodson R.J."/>
            <person name="Durkin A.S."/>
            <person name="Gwinn M.L."/>
            <person name="Haft D.H."/>
            <person name="Kolonay J.F."/>
            <person name="Smit J."/>
            <person name="Craven M.B."/>
            <person name="Khouri H.M."/>
            <person name="Shetty J."/>
            <person name="Berry K.J."/>
            <person name="Utterback T.R."/>
            <person name="Tran K."/>
            <person name="Wolf A.M."/>
            <person name="Vamathevan J.J."/>
            <person name="Ermolaeva M.D."/>
            <person name="White O."/>
            <person name="Salzberg S.L."/>
            <person name="Venter J.C."/>
            <person name="Shapiro L."/>
            <person name="Fraser C.M."/>
        </authorList>
    </citation>
    <scope>NUCLEOTIDE SEQUENCE [LARGE SCALE GENOMIC DNA]</scope>
    <source>
        <strain>ATCC 19089 / CIP 103742 / CB 15</strain>
    </source>
</reference>
<protein>
    <recommendedName>
        <fullName>Flagellar FliL protein</fullName>
    </recommendedName>
</protein>
<comment type="function">
    <text evidence="1">Controls the rotational direction of flagella during chemotaxis.</text>
</comment>
<comment type="subcellular location">
    <subcellularLocation>
        <location evidence="4">Cell inner membrane</location>
        <topology evidence="4">Single-pass membrane protein</topology>
    </subcellularLocation>
</comment>
<comment type="similarity">
    <text evidence="4">Belongs to the FliL family.</text>
</comment>
<comment type="caution">
    <text evidence="4">Could be the product of a pseudogene. This locus is annotated as an authentic frame shift in the DNA submission.</text>
</comment>
<gene>
    <name type="primary">fliL</name>
    <name type="ordered locus">CC_2062</name>
</gene>
<dbReference type="EMBL" id="AE005673">
    <property type="status" value="NOT_ANNOTATED_CDS"/>
    <property type="molecule type" value="Genomic_DNA"/>
</dbReference>
<dbReference type="PIR" id="B41875">
    <property type="entry name" value="B41875"/>
</dbReference>
<dbReference type="RefSeq" id="WP_012640398.1">
    <property type="nucleotide sequence ID" value="NC_002696.2"/>
</dbReference>
<dbReference type="SMR" id="P0CG27"/>
<dbReference type="BioCyc" id="CAULO:CC2062-MONOMER"/>
<dbReference type="Proteomes" id="UP000001816">
    <property type="component" value="Chromosome"/>
</dbReference>
<dbReference type="GO" id="GO:0009425">
    <property type="term" value="C:bacterial-type flagellum basal body"/>
    <property type="evidence" value="ECO:0007669"/>
    <property type="project" value="InterPro"/>
</dbReference>
<dbReference type="GO" id="GO:0005886">
    <property type="term" value="C:plasma membrane"/>
    <property type="evidence" value="ECO:0007669"/>
    <property type="project" value="UniProtKB-SubCell"/>
</dbReference>
<dbReference type="GO" id="GO:0071978">
    <property type="term" value="P:bacterial-type flagellum-dependent swarming motility"/>
    <property type="evidence" value="ECO:0007669"/>
    <property type="project" value="TreeGrafter"/>
</dbReference>
<dbReference type="GO" id="GO:0006935">
    <property type="term" value="P:chemotaxis"/>
    <property type="evidence" value="ECO:0007669"/>
    <property type="project" value="UniProtKB-KW"/>
</dbReference>
<dbReference type="InterPro" id="IPR005503">
    <property type="entry name" value="FliL"/>
</dbReference>
<dbReference type="PANTHER" id="PTHR35091">
    <property type="entry name" value="FLAGELLAR PROTEIN FLIL"/>
    <property type="match status" value="1"/>
</dbReference>
<dbReference type="PANTHER" id="PTHR35091:SF2">
    <property type="entry name" value="FLAGELLAR PROTEIN FLIL"/>
    <property type="match status" value="1"/>
</dbReference>
<dbReference type="Pfam" id="PF03748">
    <property type="entry name" value="FliL"/>
    <property type="match status" value="1"/>
</dbReference>
<name>FLIL_CAUVC</name>
<keyword id="KW-0997">Cell inner membrane</keyword>
<keyword id="KW-1003">Cell membrane</keyword>
<keyword id="KW-0145">Chemotaxis</keyword>
<keyword id="KW-0283">Flagellar rotation</keyword>
<keyword id="KW-0472">Membrane</keyword>
<keyword id="KW-1185">Reference proteome</keyword>
<keyword id="KW-0812">Transmembrane</keyword>
<keyword id="KW-1133">Transmembrane helix</keyword>
<evidence type="ECO:0000250" key="1"/>
<evidence type="ECO:0000255" key="2"/>
<evidence type="ECO:0000256" key="3">
    <source>
        <dbReference type="SAM" id="MobiDB-lite"/>
    </source>
</evidence>
<evidence type="ECO:0000305" key="4"/>